<dbReference type="EC" id="3.5.3.6" evidence="1"/>
<dbReference type="EMBL" id="CU928164">
    <property type="protein sequence ID" value="CAR20822.1"/>
    <property type="molecule type" value="Genomic_DNA"/>
</dbReference>
<dbReference type="RefSeq" id="YP_002410584.1">
    <property type="nucleotide sequence ID" value="NC_011750.1"/>
</dbReference>
<dbReference type="SMR" id="B7NUG6"/>
<dbReference type="STRING" id="585057.ECIAI39_4725"/>
<dbReference type="KEGG" id="ect:ECIAI39_4725"/>
<dbReference type="PATRIC" id="fig|585057.6.peg.4876"/>
<dbReference type="HOGENOM" id="CLU_052662_0_0_6"/>
<dbReference type="UniPathway" id="UPA00254">
    <property type="reaction ID" value="UER00364"/>
</dbReference>
<dbReference type="Proteomes" id="UP000000749">
    <property type="component" value="Chromosome"/>
</dbReference>
<dbReference type="GO" id="GO:0005737">
    <property type="term" value="C:cytoplasm"/>
    <property type="evidence" value="ECO:0007669"/>
    <property type="project" value="UniProtKB-SubCell"/>
</dbReference>
<dbReference type="GO" id="GO:0016990">
    <property type="term" value="F:arginine deiminase activity"/>
    <property type="evidence" value="ECO:0007669"/>
    <property type="project" value="UniProtKB-UniRule"/>
</dbReference>
<dbReference type="GO" id="GO:0019547">
    <property type="term" value="P:arginine catabolic process to ornithine"/>
    <property type="evidence" value="ECO:0007669"/>
    <property type="project" value="UniProtKB-UniRule"/>
</dbReference>
<dbReference type="GO" id="GO:0019546">
    <property type="term" value="P:arginine deiminase pathway"/>
    <property type="evidence" value="ECO:0007669"/>
    <property type="project" value="TreeGrafter"/>
</dbReference>
<dbReference type="FunFam" id="1.10.3930.10:FF:000002">
    <property type="entry name" value="Arginine deiminase"/>
    <property type="match status" value="1"/>
</dbReference>
<dbReference type="Gene3D" id="1.10.3930.10">
    <property type="entry name" value="Arginine deiminase"/>
    <property type="match status" value="1"/>
</dbReference>
<dbReference type="Gene3D" id="3.75.10.10">
    <property type="entry name" value="L-arginine/glycine Amidinotransferase, Chain A"/>
    <property type="match status" value="1"/>
</dbReference>
<dbReference type="HAMAP" id="MF_00242">
    <property type="entry name" value="Arg_deiminase"/>
    <property type="match status" value="1"/>
</dbReference>
<dbReference type="InterPro" id="IPR003876">
    <property type="entry name" value="Arg_deiminase"/>
</dbReference>
<dbReference type="NCBIfam" id="TIGR01078">
    <property type="entry name" value="arcA"/>
    <property type="match status" value="1"/>
</dbReference>
<dbReference type="NCBIfam" id="NF002381">
    <property type="entry name" value="PRK01388.1"/>
    <property type="match status" value="1"/>
</dbReference>
<dbReference type="PANTHER" id="PTHR47271">
    <property type="entry name" value="ARGININE DEIMINASE"/>
    <property type="match status" value="1"/>
</dbReference>
<dbReference type="PANTHER" id="PTHR47271:SF2">
    <property type="entry name" value="ARGININE DEIMINASE"/>
    <property type="match status" value="1"/>
</dbReference>
<dbReference type="Pfam" id="PF02274">
    <property type="entry name" value="ADI"/>
    <property type="match status" value="1"/>
</dbReference>
<dbReference type="PIRSF" id="PIRSF006356">
    <property type="entry name" value="Arg_deiminase"/>
    <property type="match status" value="1"/>
</dbReference>
<dbReference type="PRINTS" id="PR01466">
    <property type="entry name" value="ARGDEIMINASE"/>
</dbReference>
<dbReference type="SUPFAM" id="SSF55909">
    <property type="entry name" value="Pentein"/>
    <property type="match status" value="1"/>
</dbReference>
<sequence length="407" mass="45902">MMEKHYVGSEIGQLRSVMLHRPNLSLKRLTPSNCQELLFDDVLSVERAGEEHDIFANTLRQQGIEVLLLTDLLTQTLDIPEAKSWLLETQISDYRLGPTFATDVRTWLAEMSHRDLARHLSGGLTYSEIPASIKNMVVDTHDINDFIMKPLPNHLFTRDTSCWIYNGVSINPMAKPARQRETNNLRAIYRWHPQFAGGEFIKYFGDENINYDHATLEGGDVLVIGRGAVLIGMSERTTPQGIEFLAQALFKHRQAERVIAVELPKHRSCMHLDTVMTHIDIDTFSVYPEVVRPDVNCWTLTPDGHGGLKRTQESTLLHAIEKALGIDQVRLITTGGDAFEAEREQWNDANNVLTLRPGVVVGYERNIWTNEKYDKAGITVLPIPGDELGRGRGGARCMSCPLHRDGI</sequence>
<feature type="chain" id="PRO_1000119038" description="Arginine deiminase">
    <location>
        <begin position="1"/>
        <end position="407"/>
    </location>
</feature>
<feature type="active site" description="Amidino-cysteine intermediate" evidence="1">
    <location>
        <position position="397"/>
    </location>
</feature>
<protein>
    <recommendedName>
        <fullName evidence="1">Arginine deiminase</fullName>
        <shortName evidence="1">ADI</shortName>
        <ecNumber evidence="1">3.5.3.6</ecNumber>
    </recommendedName>
    <alternativeName>
        <fullName evidence="1">Arginine dihydrolase</fullName>
        <shortName evidence="1">AD</shortName>
    </alternativeName>
</protein>
<reference key="1">
    <citation type="journal article" date="2009" name="PLoS Genet.">
        <title>Organised genome dynamics in the Escherichia coli species results in highly diverse adaptive paths.</title>
        <authorList>
            <person name="Touchon M."/>
            <person name="Hoede C."/>
            <person name="Tenaillon O."/>
            <person name="Barbe V."/>
            <person name="Baeriswyl S."/>
            <person name="Bidet P."/>
            <person name="Bingen E."/>
            <person name="Bonacorsi S."/>
            <person name="Bouchier C."/>
            <person name="Bouvet O."/>
            <person name="Calteau A."/>
            <person name="Chiapello H."/>
            <person name="Clermont O."/>
            <person name="Cruveiller S."/>
            <person name="Danchin A."/>
            <person name="Diard M."/>
            <person name="Dossat C."/>
            <person name="Karoui M.E."/>
            <person name="Frapy E."/>
            <person name="Garry L."/>
            <person name="Ghigo J.M."/>
            <person name="Gilles A.M."/>
            <person name="Johnson J."/>
            <person name="Le Bouguenec C."/>
            <person name="Lescat M."/>
            <person name="Mangenot S."/>
            <person name="Martinez-Jehanne V."/>
            <person name="Matic I."/>
            <person name="Nassif X."/>
            <person name="Oztas S."/>
            <person name="Petit M.A."/>
            <person name="Pichon C."/>
            <person name="Rouy Z."/>
            <person name="Ruf C.S."/>
            <person name="Schneider D."/>
            <person name="Tourret J."/>
            <person name="Vacherie B."/>
            <person name="Vallenet D."/>
            <person name="Medigue C."/>
            <person name="Rocha E.P.C."/>
            <person name="Denamur E."/>
        </authorList>
    </citation>
    <scope>NUCLEOTIDE SEQUENCE [LARGE SCALE GENOMIC DNA]</scope>
    <source>
        <strain>IAI39 / ExPEC</strain>
    </source>
</reference>
<organism>
    <name type="scientific">Escherichia coli O7:K1 (strain IAI39 / ExPEC)</name>
    <dbReference type="NCBI Taxonomy" id="585057"/>
    <lineage>
        <taxon>Bacteria</taxon>
        <taxon>Pseudomonadati</taxon>
        <taxon>Pseudomonadota</taxon>
        <taxon>Gammaproteobacteria</taxon>
        <taxon>Enterobacterales</taxon>
        <taxon>Enterobacteriaceae</taxon>
        <taxon>Escherichia</taxon>
    </lineage>
</organism>
<keyword id="KW-0056">Arginine metabolism</keyword>
<keyword id="KW-0963">Cytoplasm</keyword>
<keyword id="KW-0378">Hydrolase</keyword>
<proteinExistence type="inferred from homology"/>
<gene>
    <name evidence="1" type="primary">arcA</name>
    <name type="ordered locus">ECIAI39_4725</name>
</gene>
<name>ARCA_ECO7I</name>
<evidence type="ECO:0000255" key="1">
    <source>
        <dbReference type="HAMAP-Rule" id="MF_00242"/>
    </source>
</evidence>
<accession>B7NUG6</accession>
<comment type="catalytic activity">
    <reaction evidence="1">
        <text>L-arginine + H2O = L-citrulline + NH4(+)</text>
        <dbReference type="Rhea" id="RHEA:19597"/>
        <dbReference type="ChEBI" id="CHEBI:15377"/>
        <dbReference type="ChEBI" id="CHEBI:28938"/>
        <dbReference type="ChEBI" id="CHEBI:32682"/>
        <dbReference type="ChEBI" id="CHEBI:57743"/>
        <dbReference type="EC" id="3.5.3.6"/>
    </reaction>
</comment>
<comment type="pathway">
    <text evidence="1">Amino-acid degradation; L-arginine degradation via ADI pathway; carbamoyl phosphate from L-arginine: step 1/2.</text>
</comment>
<comment type="subcellular location">
    <subcellularLocation>
        <location evidence="1">Cytoplasm</location>
    </subcellularLocation>
</comment>
<comment type="similarity">
    <text evidence="1">Belongs to the arginine deiminase family.</text>
</comment>